<sequence>MEKTFNLTRREDGIAILTMDVPGETMNTLKAEFGPEISEILSEIKRDSSIRGLVLISGKKDSFVAGADISMLDACQTAGDAKALSQQGHVVFNELEALNIPVVAAIHGACLGGGLELALACHQRVCSDDGKTMLGVPEVQLGLLPGGGGTQRLPRLVGITTALDMMLTGKQIRPKQALKMGLVNDVVPQTILLQTAVEMALAGKRTAKPVKKSLVNQLLEGTGFGRNIIFDQAAKQVAKKTQGNYPAPAKIIDCVRQGMAKGMQKGLEVEASHFAELVVSKESEALRSIFFATTEMKKETGAEGATPRKVKKAVILGGGLMGGGIASVTTTKAKIPARVKDINEKGLSNALSYAYKLLDKGVKRRHMTPAVRDNLMALMTTTTEYKGVKDADIVVEAVFEDLALKHQMVKDIERECGEHTIFASNTSSLPIGQIAQAASRPENVIGLHYFSPVEKMPLVEVIAHAKTSPETIATTVAFARKQGKTPIVVQDGAGFYVNRILALYMNEAAQLLLEGQSIEHLDKALVKFGFPVGPITLLDEVGIDVGAKIAPILEKELGERFKAPAAFDKLLSDDRKGRKNGKGFYQYAAGNKAPSKKKAVDESVYGVLGIKPGIDKEMSAVAERCVVQMLNEAVRCLDDGIIASPRDGDIGAIFGIGFPPFLGGPFHYIDTLGADNLVKILERYQAQYGDRFEPCPRLKEMAAEKTRFF</sequence>
<keyword id="KW-0963">Cytoplasm</keyword>
<keyword id="KW-0276">Fatty acid metabolism</keyword>
<keyword id="KW-0413">Isomerase</keyword>
<keyword id="KW-0442">Lipid degradation</keyword>
<keyword id="KW-0443">Lipid metabolism</keyword>
<keyword id="KW-0456">Lyase</keyword>
<keyword id="KW-0511">Multifunctional enzyme</keyword>
<keyword id="KW-0520">NAD</keyword>
<keyword id="KW-0560">Oxidoreductase</keyword>
<comment type="function">
    <text evidence="1">Catalyzes the formation of a hydroxyacyl-CoA by addition of water on enoyl-CoA. Also exhibits 3-hydroxyacyl-CoA epimerase and 3-hydroxyacyl-CoA dehydrogenase activities.</text>
</comment>
<comment type="catalytic activity">
    <reaction evidence="1">
        <text>a (3S)-3-hydroxyacyl-CoA = a (2E)-enoyl-CoA + H2O</text>
        <dbReference type="Rhea" id="RHEA:16105"/>
        <dbReference type="ChEBI" id="CHEBI:15377"/>
        <dbReference type="ChEBI" id="CHEBI:57318"/>
        <dbReference type="ChEBI" id="CHEBI:58856"/>
        <dbReference type="EC" id="4.2.1.17"/>
    </reaction>
</comment>
<comment type="catalytic activity">
    <reaction evidence="1">
        <text>a 4-saturated-(3S)-3-hydroxyacyl-CoA = a (3E)-enoyl-CoA + H2O</text>
        <dbReference type="Rhea" id="RHEA:20724"/>
        <dbReference type="ChEBI" id="CHEBI:15377"/>
        <dbReference type="ChEBI" id="CHEBI:58521"/>
        <dbReference type="ChEBI" id="CHEBI:137480"/>
        <dbReference type="EC" id="4.2.1.17"/>
    </reaction>
</comment>
<comment type="catalytic activity">
    <reaction evidence="1">
        <text>a (3S)-3-hydroxyacyl-CoA + NAD(+) = a 3-oxoacyl-CoA + NADH + H(+)</text>
        <dbReference type="Rhea" id="RHEA:22432"/>
        <dbReference type="ChEBI" id="CHEBI:15378"/>
        <dbReference type="ChEBI" id="CHEBI:57318"/>
        <dbReference type="ChEBI" id="CHEBI:57540"/>
        <dbReference type="ChEBI" id="CHEBI:57945"/>
        <dbReference type="ChEBI" id="CHEBI:90726"/>
        <dbReference type="EC" id="1.1.1.35"/>
    </reaction>
</comment>
<comment type="catalytic activity">
    <reaction evidence="1">
        <text>(3S)-3-hydroxybutanoyl-CoA = (3R)-3-hydroxybutanoyl-CoA</text>
        <dbReference type="Rhea" id="RHEA:21760"/>
        <dbReference type="ChEBI" id="CHEBI:57315"/>
        <dbReference type="ChEBI" id="CHEBI:57316"/>
        <dbReference type="EC" id="5.1.2.3"/>
    </reaction>
</comment>
<comment type="pathway">
    <text evidence="1">Lipid metabolism; fatty acid beta-oxidation.</text>
</comment>
<comment type="subunit">
    <text evidence="1">Heterotetramer of two alpha chains (FadJ) and two beta chains (FadI).</text>
</comment>
<comment type="subcellular location">
    <subcellularLocation>
        <location evidence="1">Cytoplasm</location>
    </subcellularLocation>
</comment>
<comment type="similarity">
    <text evidence="1">In the N-terminal section; belongs to the enoyl-CoA hydratase/isomerase family.</text>
</comment>
<comment type="similarity">
    <text evidence="1">In the central section; belongs to the 3-hydroxyacyl-CoA dehydrogenase family.</text>
</comment>
<protein>
    <recommendedName>
        <fullName evidence="1">Fatty acid oxidation complex subunit alpha</fullName>
    </recommendedName>
    <domain>
        <recommendedName>
            <fullName evidence="1">Enoyl-CoA hydratase/3-hydroxybutyryl-CoA epimerase</fullName>
            <ecNumber evidence="1">4.2.1.17</ecNumber>
            <ecNumber evidence="1">5.1.2.3</ecNumber>
        </recommendedName>
    </domain>
    <domain>
        <recommendedName>
            <fullName evidence="1">3-hydroxyacyl-CoA dehydrogenase</fullName>
            <ecNumber evidence="1">1.1.1.35</ecNumber>
        </recommendedName>
    </domain>
</protein>
<proteinExistence type="inferred from homology"/>
<organism>
    <name type="scientific">Shewanella sp. (strain MR-4)</name>
    <dbReference type="NCBI Taxonomy" id="60480"/>
    <lineage>
        <taxon>Bacteria</taxon>
        <taxon>Pseudomonadati</taxon>
        <taxon>Pseudomonadota</taxon>
        <taxon>Gammaproteobacteria</taxon>
        <taxon>Alteromonadales</taxon>
        <taxon>Shewanellaceae</taxon>
        <taxon>Shewanella</taxon>
    </lineage>
</organism>
<evidence type="ECO:0000255" key="1">
    <source>
        <dbReference type="HAMAP-Rule" id="MF_01617"/>
    </source>
</evidence>
<reference key="1">
    <citation type="submission" date="2006-08" db="EMBL/GenBank/DDBJ databases">
        <title>Complete sequence of Shewanella sp. MR-4.</title>
        <authorList>
            <consortium name="US DOE Joint Genome Institute"/>
            <person name="Copeland A."/>
            <person name="Lucas S."/>
            <person name="Lapidus A."/>
            <person name="Barry K."/>
            <person name="Detter J.C."/>
            <person name="Glavina del Rio T."/>
            <person name="Hammon N."/>
            <person name="Israni S."/>
            <person name="Dalin E."/>
            <person name="Tice H."/>
            <person name="Pitluck S."/>
            <person name="Kiss H."/>
            <person name="Brettin T."/>
            <person name="Bruce D."/>
            <person name="Han C."/>
            <person name="Tapia R."/>
            <person name="Gilna P."/>
            <person name="Schmutz J."/>
            <person name="Larimer F."/>
            <person name="Land M."/>
            <person name="Hauser L."/>
            <person name="Kyrpides N."/>
            <person name="Mikhailova N."/>
            <person name="Nealson K."/>
            <person name="Konstantinidis K."/>
            <person name="Klappenbach J."/>
            <person name="Tiedje J."/>
            <person name="Richardson P."/>
        </authorList>
    </citation>
    <scope>NUCLEOTIDE SEQUENCE [LARGE SCALE GENOMIC DNA]</scope>
    <source>
        <strain>MR-4</strain>
    </source>
</reference>
<accession>Q0HKD1</accession>
<name>FADJ_SHESM</name>
<gene>
    <name evidence="1" type="primary">fadJ</name>
    <name type="ordered locus">Shewmr4_1408</name>
</gene>
<dbReference type="EC" id="4.2.1.17" evidence="1"/>
<dbReference type="EC" id="5.1.2.3" evidence="1"/>
<dbReference type="EC" id="1.1.1.35" evidence="1"/>
<dbReference type="EMBL" id="CP000446">
    <property type="protein sequence ID" value="ABI38486.1"/>
    <property type="molecule type" value="Genomic_DNA"/>
</dbReference>
<dbReference type="RefSeq" id="WP_011622191.1">
    <property type="nucleotide sequence ID" value="NC_008321.1"/>
</dbReference>
<dbReference type="SMR" id="Q0HKD1"/>
<dbReference type="KEGG" id="she:Shewmr4_1408"/>
<dbReference type="HOGENOM" id="CLU_009834_16_1_6"/>
<dbReference type="UniPathway" id="UPA00659"/>
<dbReference type="GO" id="GO:0005737">
    <property type="term" value="C:cytoplasm"/>
    <property type="evidence" value="ECO:0007669"/>
    <property type="project" value="UniProtKB-SubCell"/>
</dbReference>
<dbReference type="GO" id="GO:0008692">
    <property type="term" value="F:3-hydroxybutyryl-CoA epimerase activity"/>
    <property type="evidence" value="ECO:0007669"/>
    <property type="project" value="UniProtKB-UniRule"/>
</dbReference>
<dbReference type="GO" id="GO:0004300">
    <property type="term" value="F:enoyl-CoA hydratase activity"/>
    <property type="evidence" value="ECO:0007669"/>
    <property type="project" value="UniProtKB-UniRule"/>
</dbReference>
<dbReference type="GO" id="GO:0016509">
    <property type="term" value="F:long-chain-3-hydroxyacyl-CoA dehydrogenase activity"/>
    <property type="evidence" value="ECO:0007669"/>
    <property type="project" value="TreeGrafter"/>
</dbReference>
<dbReference type="GO" id="GO:0070403">
    <property type="term" value="F:NAD+ binding"/>
    <property type="evidence" value="ECO:0007669"/>
    <property type="project" value="InterPro"/>
</dbReference>
<dbReference type="GO" id="GO:0006635">
    <property type="term" value="P:fatty acid beta-oxidation"/>
    <property type="evidence" value="ECO:0007669"/>
    <property type="project" value="UniProtKB-UniRule"/>
</dbReference>
<dbReference type="CDD" id="cd06558">
    <property type="entry name" value="crotonase-like"/>
    <property type="match status" value="1"/>
</dbReference>
<dbReference type="FunFam" id="3.90.226.10:FF:000011">
    <property type="entry name" value="Fatty acid oxidation complex subunit alpha"/>
    <property type="match status" value="1"/>
</dbReference>
<dbReference type="FunFam" id="3.40.50.720:FF:000009">
    <property type="entry name" value="Fatty oxidation complex, alpha subunit"/>
    <property type="match status" value="1"/>
</dbReference>
<dbReference type="Gene3D" id="1.10.1040.50">
    <property type="match status" value="1"/>
</dbReference>
<dbReference type="Gene3D" id="3.90.226.10">
    <property type="entry name" value="2-enoyl-CoA Hydratase, Chain A, domain 1"/>
    <property type="match status" value="1"/>
</dbReference>
<dbReference type="Gene3D" id="3.40.50.720">
    <property type="entry name" value="NAD(P)-binding Rossmann-like Domain"/>
    <property type="match status" value="1"/>
</dbReference>
<dbReference type="HAMAP" id="MF_01617">
    <property type="entry name" value="FadJ"/>
    <property type="match status" value="1"/>
</dbReference>
<dbReference type="InterPro" id="IPR006176">
    <property type="entry name" value="3-OHacyl-CoA_DH_NAD-bd"/>
</dbReference>
<dbReference type="InterPro" id="IPR006108">
    <property type="entry name" value="3HC_DH_C"/>
</dbReference>
<dbReference type="InterPro" id="IPR008927">
    <property type="entry name" value="6-PGluconate_DH-like_C_sf"/>
</dbReference>
<dbReference type="InterPro" id="IPR029045">
    <property type="entry name" value="ClpP/crotonase-like_dom_sf"/>
</dbReference>
<dbReference type="InterPro" id="IPR001753">
    <property type="entry name" value="Enoyl-CoA_hydra/iso"/>
</dbReference>
<dbReference type="InterPro" id="IPR050136">
    <property type="entry name" value="FA_oxidation_alpha_subunit"/>
</dbReference>
<dbReference type="InterPro" id="IPR012802">
    <property type="entry name" value="FadJ"/>
</dbReference>
<dbReference type="InterPro" id="IPR036291">
    <property type="entry name" value="NAD(P)-bd_dom_sf"/>
</dbReference>
<dbReference type="NCBIfam" id="TIGR02440">
    <property type="entry name" value="FadJ"/>
    <property type="match status" value="1"/>
</dbReference>
<dbReference type="NCBIfam" id="NF008363">
    <property type="entry name" value="PRK11154.1"/>
    <property type="match status" value="1"/>
</dbReference>
<dbReference type="PANTHER" id="PTHR43612">
    <property type="entry name" value="TRIFUNCTIONAL ENZYME SUBUNIT ALPHA"/>
    <property type="match status" value="1"/>
</dbReference>
<dbReference type="PANTHER" id="PTHR43612:SF3">
    <property type="entry name" value="TRIFUNCTIONAL ENZYME SUBUNIT ALPHA, MITOCHONDRIAL"/>
    <property type="match status" value="1"/>
</dbReference>
<dbReference type="Pfam" id="PF00725">
    <property type="entry name" value="3HCDH"/>
    <property type="match status" value="2"/>
</dbReference>
<dbReference type="Pfam" id="PF02737">
    <property type="entry name" value="3HCDH_N"/>
    <property type="match status" value="1"/>
</dbReference>
<dbReference type="Pfam" id="PF00378">
    <property type="entry name" value="ECH_1"/>
    <property type="match status" value="1"/>
</dbReference>
<dbReference type="SUPFAM" id="SSF48179">
    <property type="entry name" value="6-phosphogluconate dehydrogenase C-terminal domain-like"/>
    <property type="match status" value="2"/>
</dbReference>
<dbReference type="SUPFAM" id="SSF52096">
    <property type="entry name" value="ClpP/crotonase"/>
    <property type="match status" value="1"/>
</dbReference>
<dbReference type="SUPFAM" id="SSF51735">
    <property type="entry name" value="NAD(P)-binding Rossmann-fold domains"/>
    <property type="match status" value="1"/>
</dbReference>
<feature type="chain" id="PRO_0000273985" description="Fatty acid oxidation complex subunit alpha">
    <location>
        <begin position="1"/>
        <end position="709"/>
    </location>
</feature>
<feature type="region of interest" description="Enoyl-CoA hydratase" evidence="1">
    <location>
        <begin position="1"/>
        <end position="188"/>
    </location>
</feature>
<feature type="region of interest" description="3-hydroxyacyl-CoA dehydrogenase" evidence="1">
    <location>
        <begin position="308"/>
        <end position="709"/>
    </location>
</feature>
<feature type="site" description="Important for catalytic activity" evidence="1">
    <location>
        <position position="116"/>
    </location>
</feature>
<feature type="site" description="Important for catalytic activity" evidence="1">
    <location>
        <position position="138"/>
    </location>
</feature>